<evidence type="ECO:0000255" key="1">
    <source>
        <dbReference type="HAMAP-Rule" id="MF_00272"/>
    </source>
</evidence>
<evidence type="ECO:0000255" key="2">
    <source>
        <dbReference type="PROSITE-ProRule" id="PRU01066"/>
    </source>
</evidence>
<comment type="function">
    <text evidence="1">The glycine cleavage system catalyzes the degradation of glycine. The H protein shuttles the methylamine group of glycine from the P protein to the T protein.</text>
</comment>
<comment type="function">
    <text evidence="1">Is also involved in protein lipoylation via its role as an octanoyl/lipoyl carrier protein intermediate.</text>
</comment>
<comment type="cofactor">
    <cofactor evidence="1">
        <name>(R)-lipoate</name>
        <dbReference type="ChEBI" id="CHEBI:83088"/>
    </cofactor>
    <text evidence="1">Binds 1 lipoyl cofactor covalently.</text>
</comment>
<comment type="subunit">
    <text evidence="1">The glycine cleavage system is composed of four proteins: P, T, L and H.</text>
</comment>
<comment type="similarity">
    <text evidence="1">Belongs to the GcvH family.</text>
</comment>
<reference key="1">
    <citation type="submission" date="2008-10" db="EMBL/GenBank/DDBJ databases">
        <title>Genome sequence of Bacillus cereus G9842.</title>
        <authorList>
            <person name="Dodson R.J."/>
            <person name="Durkin A.S."/>
            <person name="Rosovitz M.J."/>
            <person name="Rasko D.A."/>
            <person name="Hoffmaster A."/>
            <person name="Ravel J."/>
            <person name="Sutton G."/>
        </authorList>
    </citation>
    <scope>NUCLEOTIDE SEQUENCE [LARGE SCALE GENOMIC DNA]</scope>
    <source>
        <strain>G9842</strain>
    </source>
</reference>
<sequence>MSIPNNLRYSEEHEWVKTEGNEVVIGITHFAQGELGDIVFVELPEVGATIEADEPFGSVESVKTVSELYAPVSGKVVAVNEELSDQPELVNESPYEGAWMVKVELSDASQVEKLLTAEKYAEMTNQD</sequence>
<protein>
    <recommendedName>
        <fullName evidence="1">Glycine cleavage system H protein</fullName>
    </recommendedName>
    <alternativeName>
        <fullName evidence="1">Octanoyl/lipoyl carrier protein</fullName>
    </alternativeName>
</protein>
<gene>
    <name evidence="1" type="primary">gcvH</name>
    <name type="ordered locus">BCG9842_B0105</name>
</gene>
<accession>B7INR1</accession>
<dbReference type="EMBL" id="CP001186">
    <property type="protein sequence ID" value="ACK97939.1"/>
    <property type="molecule type" value="Genomic_DNA"/>
</dbReference>
<dbReference type="RefSeq" id="WP_000026896.1">
    <property type="nucleotide sequence ID" value="NC_011772.1"/>
</dbReference>
<dbReference type="SMR" id="B7INR1"/>
<dbReference type="GeneID" id="93006092"/>
<dbReference type="KEGG" id="bcg:BCG9842_B0105"/>
<dbReference type="HOGENOM" id="CLU_097408_2_2_9"/>
<dbReference type="Proteomes" id="UP000006744">
    <property type="component" value="Chromosome"/>
</dbReference>
<dbReference type="GO" id="GO:0005829">
    <property type="term" value="C:cytosol"/>
    <property type="evidence" value="ECO:0007669"/>
    <property type="project" value="TreeGrafter"/>
</dbReference>
<dbReference type="GO" id="GO:0005960">
    <property type="term" value="C:glycine cleavage complex"/>
    <property type="evidence" value="ECO:0007669"/>
    <property type="project" value="InterPro"/>
</dbReference>
<dbReference type="GO" id="GO:0019464">
    <property type="term" value="P:glycine decarboxylation via glycine cleavage system"/>
    <property type="evidence" value="ECO:0007669"/>
    <property type="project" value="UniProtKB-UniRule"/>
</dbReference>
<dbReference type="CDD" id="cd06848">
    <property type="entry name" value="GCS_H"/>
    <property type="match status" value="1"/>
</dbReference>
<dbReference type="Gene3D" id="2.40.50.100">
    <property type="match status" value="1"/>
</dbReference>
<dbReference type="HAMAP" id="MF_00272">
    <property type="entry name" value="GcvH"/>
    <property type="match status" value="1"/>
</dbReference>
<dbReference type="InterPro" id="IPR003016">
    <property type="entry name" value="2-oxoA_DH_lipoyl-BS"/>
</dbReference>
<dbReference type="InterPro" id="IPR000089">
    <property type="entry name" value="Biotin_lipoyl"/>
</dbReference>
<dbReference type="InterPro" id="IPR002930">
    <property type="entry name" value="GCV_H"/>
</dbReference>
<dbReference type="InterPro" id="IPR033753">
    <property type="entry name" value="GCV_H/Fam206"/>
</dbReference>
<dbReference type="InterPro" id="IPR017453">
    <property type="entry name" value="GCV_H_sub"/>
</dbReference>
<dbReference type="InterPro" id="IPR011053">
    <property type="entry name" value="Single_hybrid_motif"/>
</dbReference>
<dbReference type="NCBIfam" id="TIGR00527">
    <property type="entry name" value="gcvH"/>
    <property type="match status" value="1"/>
</dbReference>
<dbReference type="NCBIfam" id="NF002270">
    <property type="entry name" value="PRK01202.1"/>
    <property type="match status" value="1"/>
</dbReference>
<dbReference type="PANTHER" id="PTHR11715">
    <property type="entry name" value="GLYCINE CLEAVAGE SYSTEM H PROTEIN"/>
    <property type="match status" value="1"/>
</dbReference>
<dbReference type="PANTHER" id="PTHR11715:SF3">
    <property type="entry name" value="GLYCINE CLEAVAGE SYSTEM H PROTEIN-RELATED"/>
    <property type="match status" value="1"/>
</dbReference>
<dbReference type="Pfam" id="PF01597">
    <property type="entry name" value="GCV_H"/>
    <property type="match status" value="1"/>
</dbReference>
<dbReference type="SUPFAM" id="SSF51230">
    <property type="entry name" value="Single hybrid motif"/>
    <property type="match status" value="1"/>
</dbReference>
<dbReference type="PROSITE" id="PS50968">
    <property type="entry name" value="BIOTINYL_LIPOYL"/>
    <property type="match status" value="1"/>
</dbReference>
<dbReference type="PROSITE" id="PS00189">
    <property type="entry name" value="LIPOYL"/>
    <property type="match status" value="1"/>
</dbReference>
<organism>
    <name type="scientific">Bacillus cereus (strain G9842)</name>
    <dbReference type="NCBI Taxonomy" id="405531"/>
    <lineage>
        <taxon>Bacteria</taxon>
        <taxon>Bacillati</taxon>
        <taxon>Bacillota</taxon>
        <taxon>Bacilli</taxon>
        <taxon>Bacillales</taxon>
        <taxon>Bacillaceae</taxon>
        <taxon>Bacillus</taxon>
        <taxon>Bacillus cereus group</taxon>
    </lineage>
</organism>
<feature type="chain" id="PRO_1000119292" description="Glycine cleavage system H protein">
    <location>
        <begin position="1"/>
        <end position="127"/>
    </location>
</feature>
<feature type="domain" description="Lipoyl-binding" evidence="2">
    <location>
        <begin position="22"/>
        <end position="104"/>
    </location>
</feature>
<feature type="modified residue" description="N6-lipoyllysine" evidence="1">
    <location>
        <position position="63"/>
    </location>
</feature>
<keyword id="KW-0450">Lipoyl</keyword>
<proteinExistence type="inferred from homology"/>
<name>GCSH_BACC2</name>